<organism>
    <name type="scientific">Drosophila ananassae</name>
    <name type="common">Fruit fly</name>
    <dbReference type="NCBI Taxonomy" id="7217"/>
    <lineage>
        <taxon>Eukaryota</taxon>
        <taxon>Metazoa</taxon>
        <taxon>Ecdysozoa</taxon>
        <taxon>Arthropoda</taxon>
        <taxon>Hexapoda</taxon>
        <taxon>Insecta</taxon>
        <taxon>Pterygota</taxon>
        <taxon>Neoptera</taxon>
        <taxon>Endopterygota</taxon>
        <taxon>Diptera</taxon>
        <taxon>Brachycera</taxon>
        <taxon>Muscomorpha</taxon>
        <taxon>Ephydroidea</taxon>
        <taxon>Drosophilidae</taxon>
        <taxon>Drosophila</taxon>
        <taxon>Sophophora</taxon>
    </lineage>
</organism>
<evidence type="ECO:0000250" key="1">
    <source>
        <dbReference type="UniProtKB" id="Q9W4X7"/>
    </source>
</evidence>
<evidence type="ECO:0000255" key="2">
    <source>
        <dbReference type="HAMAP-Rule" id="MF_03006"/>
    </source>
</evidence>
<protein>
    <recommendedName>
        <fullName evidence="1">Eukaryotic translation initiation factor 3 subunit G-1</fullName>
    </recommendedName>
    <alternativeName>
        <fullName evidence="2">Eukaryotic translation initiation factor 3 RNA-binding subunit-1</fullName>
        <shortName evidence="2">eIF-3 RNA-binding subunit 1</shortName>
    </alternativeName>
    <alternativeName>
        <fullName evidence="2">Eukaryotic translation initiation factor 3 subunit 4-1</fullName>
    </alternativeName>
</protein>
<dbReference type="EMBL" id="CH902632">
    <property type="protein sequence ID" value="EDV32816.1"/>
    <property type="molecule type" value="Genomic_DNA"/>
</dbReference>
<dbReference type="SMR" id="B3MYX2"/>
<dbReference type="FunCoup" id="B3MYX2">
    <property type="interactions" value="1705"/>
</dbReference>
<dbReference type="STRING" id="7217.B3MYX2"/>
<dbReference type="EnsemblMetazoa" id="FBtr0126642">
    <property type="protein sequence ID" value="FBpp0125134"/>
    <property type="gene ID" value="FBgn0098942"/>
</dbReference>
<dbReference type="EnsemblMetazoa" id="XM_001966492.4">
    <property type="protein sequence ID" value="XP_001966528.1"/>
    <property type="gene ID" value="LOC6504612"/>
</dbReference>
<dbReference type="GeneID" id="6504612"/>
<dbReference type="KEGG" id="dan:6504612"/>
<dbReference type="CTD" id="31243"/>
<dbReference type="eggNOG" id="KOG0122">
    <property type="taxonomic scope" value="Eukaryota"/>
</dbReference>
<dbReference type="HOGENOM" id="CLU_034595_0_0_1"/>
<dbReference type="InParanoid" id="B3MYX2"/>
<dbReference type="OMA" id="ICQGDHF"/>
<dbReference type="OrthoDB" id="639027at2759"/>
<dbReference type="PhylomeDB" id="B3MYX2"/>
<dbReference type="Proteomes" id="UP000007801">
    <property type="component" value="Unassembled WGS sequence"/>
</dbReference>
<dbReference type="GO" id="GO:0016282">
    <property type="term" value="C:eukaryotic 43S preinitiation complex"/>
    <property type="evidence" value="ECO:0007669"/>
    <property type="project" value="UniProtKB-UniRule"/>
</dbReference>
<dbReference type="GO" id="GO:0033290">
    <property type="term" value="C:eukaryotic 48S preinitiation complex"/>
    <property type="evidence" value="ECO:0007669"/>
    <property type="project" value="UniProtKB-UniRule"/>
</dbReference>
<dbReference type="GO" id="GO:0005852">
    <property type="term" value="C:eukaryotic translation initiation factor 3 complex"/>
    <property type="evidence" value="ECO:0007669"/>
    <property type="project" value="UniProtKB-UniRule"/>
</dbReference>
<dbReference type="GO" id="GO:0003723">
    <property type="term" value="F:RNA binding"/>
    <property type="evidence" value="ECO:0007669"/>
    <property type="project" value="UniProtKB-UniRule"/>
</dbReference>
<dbReference type="GO" id="GO:0003743">
    <property type="term" value="F:translation initiation factor activity"/>
    <property type="evidence" value="ECO:0007669"/>
    <property type="project" value="UniProtKB-UniRule"/>
</dbReference>
<dbReference type="GO" id="GO:0001732">
    <property type="term" value="P:formation of cytoplasmic translation initiation complex"/>
    <property type="evidence" value="ECO:0007669"/>
    <property type="project" value="UniProtKB-UniRule"/>
</dbReference>
<dbReference type="CDD" id="cd12933">
    <property type="entry name" value="eIF3G"/>
    <property type="match status" value="1"/>
</dbReference>
<dbReference type="CDD" id="cd12408">
    <property type="entry name" value="RRM_eIF3G_like"/>
    <property type="match status" value="1"/>
</dbReference>
<dbReference type="FunFam" id="3.30.70.330:FF:000828">
    <property type="entry name" value="Eukaryotic translation initiation factor 3 subunit G"/>
    <property type="match status" value="1"/>
</dbReference>
<dbReference type="Gene3D" id="3.30.70.330">
    <property type="match status" value="1"/>
</dbReference>
<dbReference type="HAMAP" id="MF_03006">
    <property type="entry name" value="eIF3g"/>
    <property type="match status" value="1"/>
</dbReference>
<dbReference type="InterPro" id="IPR017334">
    <property type="entry name" value="eIF3_g"/>
</dbReference>
<dbReference type="InterPro" id="IPR024675">
    <property type="entry name" value="eIF3g_N"/>
</dbReference>
<dbReference type="InterPro" id="IPR034240">
    <property type="entry name" value="eIF3G_RRM"/>
</dbReference>
<dbReference type="InterPro" id="IPR012677">
    <property type="entry name" value="Nucleotide-bd_a/b_plait_sf"/>
</dbReference>
<dbReference type="InterPro" id="IPR035979">
    <property type="entry name" value="RBD_domain_sf"/>
</dbReference>
<dbReference type="InterPro" id="IPR000504">
    <property type="entry name" value="RRM_dom"/>
</dbReference>
<dbReference type="PANTHER" id="PTHR10352">
    <property type="entry name" value="EUKARYOTIC TRANSLATION INITIATION FACTOR 3 SUBUNIT G"/>
    <property type="match status" value="1"/>
</dbReference>
<dbReference type="Pfam" id="PF12353">
    <property type="entry name" value="eIF3g"/>
    <property type="match status" value="1"/>
</dbReference>
<dbReference type="Pfam" id="PF00076">
    <property type="entry name" value="RRM_1"/>
    <property type="match status" value="1"/>
</dbReference>
<dbReference type="PIRSF" id="PIRSF037949">
    <property type="entry name" value="Transl_init_eIF-3_RNA-bind"/>
    <property type="match status" value="1"/>
</dbReference>
<dbReference type="SMART" id="SM00360">
    <property type="entry name" value="RRM"/>
    <property type="match status" value="1"/>
</dbReference>
<dbReference type="SUPFAM" id="SSF54928">
    <property type="entry name" value="RNA-binding domain, RBD"/>
    <property type="match status" value="1"/>
</dbReference>
<dbReference type="PROSITE" id="PS50102">
    <property type="entry name" value="RRM"/>
    <property type="match status" value="1"/>
</dbReference>
<name>EI3G1_DROAN</name>
<comment type="function">
    <text evidence="2">RNA-binding component of the eukaryotic translation initiation factor 3 (eIF-3) complex, which is involved in protein synthesis of a specialized repertoire of mRNAs and, together with other initiation factors, stimulates binding of mRNA and methionyl-tRNAi to the 40S ribosome. The eIF-3 complex specifically targets and initiates translation of a subset of mRNAs involved in cell proliferation. This subunit can bind 18S rRNA.</text>
</comment>
<comment type="subunit">
    <text evidence="2">Component of the eukaryotic translation initiation factor 3 (eIF-3) complex. The eIF-3 complex interacts with pix.</text>
</comment>
<comment type="subcellular location">
    <subcellularLocation>
        <location evidence="2">Cytoplasm</location>
    </subcellularLocation>
</comment>
<comment type="similarity">
    <text evidence="2">Belongs to the eIF-3 subunit G family.</text>
</comment>
<sequence length="270" mass="30071">MPGIETIKSSWADEVELDYGGLPPTTETVENGHKYVTEYKYNKDDKKTKVVRTYKISKQVVPKTVAKRRTWTKFGESKNDKPGPNSQTTMVSEEIIMQFLNSKEDEKANDPLLDPTKNIAKCRICNGEHWSVNCPYKGTAMDTNMMEKKATAAAAAAVDAPKSGKYVPPFLKDSVGKVGMGMRGRDDTAAIRISNLSESMTEADLEELVKKIGPQSKMYLARDKNTGLCKGFAYVHFKQRKDAAAAIEILNGHGYDHLILSVEWSKPQNN</sequence>
<keyword id="KW-0963">Cytoplasm</keyword>
<keyword id="KW-0396">Initiation factor</keyword>
<keyword id="KW-0648">Protein biosynthesis</keyword>
<keyword id="KW-1185">Reference proteome</keyword>
<keyword id="KW-0694">RNA-binding</keyword>
<proteinExistence type="inferred from homology"/>
<accession>B3MYX2</accession>
<feature type="chain" id="PRO_0000365407" description="Eukaryotic translation initiation factor 3 subunit G-1">
    <location>
        <begin position="1"/>
        <end position="270"/>
    </location>
</feature>
<feature type="domain" description="RRM" evidence="2">
    <location>
        <begin position="189"/>
        <end position="267"/>
    </location>
</feature>
<reference key="1">
    <citation type="journal article" date="2007" name="Nature">
        <title>Evolution of genes and genomes on the Drosophila phylogeny.</title>
        <authorList>
            <consortium name="Drosophila 12 genomes consortium"/>
        </authorList>
    </citation>
    <scope>NUCLEOTIDE SEQUENCE [LARGE SCALE GENOMIC DNA]</scope>
    <source>
        <strain>Tucson 14024-0371.13</strain>
    </source>
</reference>
<gene>
    <name evidence="1" type="primary">eIF3g1</name>
    <name evidence="2" type="synonym">eIF3-S4</name>
    <name evidence="1" type="synonym">eIF3ga</name>
    <name type="ORF">GF21942</name>
</gene>